<protein>
    <recommendedName>
        <fullName evidence="4">Very-long-chain 3-oxoacyl-CoA reductase</fullName>
        <ecNumber evidence="4">1.1.1.330</ecNumber>
    </recommendedName>
    <alternativeName>
        <fullName evidence="4">3-ketoacyl-CoA reductase</fullName>
        <shortName evidence="4">3-ketoreductase</shortName>
        <shortName evidence="4">KAR</shortName>
    </alternativeName>
    <alternativeName>
        <fullName evidence="4">Microsomal beta-keto-reductase</fullName>
    </alternativeName>
</protein>
<organism>
    <name type="scientific">Laccaria bicolor (strain S238N-H82 / ATCC MYA-4686)</name>
    <name type="common">Bicoloured deceiver</name>
    <name type="synonym">Laccaria laccata var. bicolor</name>
    <dbReference type="NCBI Taxonomy" id="486041"/>
    <lineage>
        <taxon>Eukaryota</taxon>
        <taxon>Fungi</taxon>
        <taxon>Dikarya</taxon>
        <taxon>Basidiomycota</taxon>
        <taxon>Agaricomycotina</taxon>
        <taxon>Agaricomycetes</taxon>
        <taxon>Agaricomycetidae</taxon>
        <taxon>Agaricales</taxon>
        <taxon>Agaricineae</taxon>
        <taxon>Hydnangiaceae</taxon>
        <taxon>Laccaria</taxon>
    </lineage>
</organism>
<evidence type="ECO:0000250" key="1">
    <source>
        <dbReference type="UniProtKB" id="L0E2Z4"/>
    </source>
</evidence>
<evidence type="ECO:0000250" key="2">
    <source>
        <dbReference type="UniProtKB" id="O93868"/>
    </source>
</evidence>
<evidence type="ECO:0000250" key="3">
    <source>
        <dbReference type="UniProtKB" id="P38286"/>
    </source>
</evidence>
<evidence type="ECO:0000255" key="4">
    <source>
        <dbReference type="HAMAP-Rule" id="MF_03107"/>
    </source>
</evidence>
<reference key="1">
    <citation type="journal article" date="2008" name="Nature">
        <title>The genome of Laccaria bicolor provides insights into mycorrhizal symbiosis.</title>
        <authorList>
            <person name="Martin F."/>
            <person name="Aerts A."/>
            <person name="Ahren D."/>
            <person name="Brun A."/>
            <person name="Danchin E.G.J."/>
            <person name="Duchaussoy F."/>
            <person name="Gibon J."/>
            <person name="Kohler A."/>
            <person name="Lindquist E."/>
            <person name="Pereda V."/>
            <person name="Salamov A."/>
            <person name="Shapiro H.J."/>
            <person name="Wuyts J."/>
            <person name="Blaudez D."/>
            <person name="Buee M."/>
            <person name="Brokstein P."/>
            <person name="Canbaeck B."/>
            <person name="Cohen D."/>
            <person name="Courty P.E."/>
            <person name="Coutinho P.M."/>
            <person name="Delaruelle C."/>
            <person name="Detter J.C."/>
            <person name="Deveau A."/>
            <person name="DiFazio S."/>
            <person name="Duplessis S."/>
            <person name="Fraissinet-Tachet L."/>
            <person name="Lucic E."/>
            <person name="Frey-Klett P."/>
            <person name="Fourrey C."/>
            <person name="Feussner I."/>
            <person name="Gay G."/>
            <person name="Grimwood J."/>
            <person name="Hoegger P.J."/>
            <person name="Jain P."/>
            <person name="Kilaru S."/>
            <person name="Labbe J."/>
            <person name="Lin Y.C."/>
            <person name="Legue V."/>
            <person name="Le Tacon F."/>
            <person name="Marmeisse R."/>
            <person name="Melayah D."/>
            <person name="Montanini B."/>
            <person name="Muratet M."/>
            <person name="Nehls U."/>
            <person name="Niculita-Hirzel H."/>
            <person name="Oudot-Le Secq M.P."/>
            <person name="Peter M."/>
            <person name="Quesneville H."/>
            <person name="Rajashekar B."/>
            <person name="Reich M."/>
            <person name="Rouhier N."/>
            <person name="Schmutz J."/>
            <person name="Yin T."/>
            <person name="Chalot M."/>
            <person name="Henrissat B."/>
            <person name="Kuees U."/>
            <person name="Lucas S."/>
            <person name="Van de Peer Y."/>
            <person name="Podila G.K."/>
            <person name="Polle A."/>
            <person name="Pukkila P.J."/>
            <person name="Richardson P.M."/>
            <person name="Rouze P."/>
            <person name="Sanders I.R."/>
            <person name="Stajich J.E."/>
            <person name="Tunlid A."/>
            <person name="Tuskan G."/>
            <person name="Grigoriev I.V."/>
        </authorList>
    </citation>
    <scope>NUCLEOTIDE SEQUENCE [LARGE SCALE GENOMIC DNA]</scope>
    <source>
        <strain>S238N-H82 / ATCC MYA-4686</strain>
    </source>
</reference>
<gene>
    <name type="ORF">LACBIDRAFT_192627</name>
</gene>
<comment type="function">
    <text evidence="4">Component of the microsomal membrane bound fatty acid elongation system, which produces the 26-carbon very long-chain fatty acids (VLCFA) from palmitate. Catalyzes the reduction of the 3-ketoacyl-CoA intermediate that is formed in each cycle of fatty acid elongation. VLCFAs serve as precursors for ceramide and sphingolipids.</text>
</comment>
<comment type="catalytic activity">
    <reaction evidence="4">
        <text>a very-long-chain (3R)-3-hydroxyacyl-CoA + NADP(+) = a very-long-chain 3-oxoacyl-CoA + NADPH + H(+)</text>
        <dbReference type="Rhea" id="RHEA:48680"/>
        <dbReference type="ChEBI" id="CHEBI:15378"/>
        <dbReference type="ChEBI" id="CHEBI:57783"/>
        <dbReference type="ChEBI" id="CHEBI:58349"/>
        <dbReference type="ChEBI" id="CHEBI:85440"/>
        <dbReference type="ChEBI" id="CHEBI:90725"/>
        <dbReference type="EC" id="1.1.1.330"/>
    </reaction>
</comment>
<comment type="pathway">
    <text evidence="3">Lipid metabolism; fatty acid biosynthesis.</text>
</comment>
<comment type="subcellular location">
    <subcellularLocation>
        <location evidence="4">Endoplasmic reticulum membrane</location>
        <topology evidence="4">Single-pass membrane protein</topology>
    </subcellularLocation>
</comment>
<comment type="similarity">
    <text evidence="4">Belongs to the short-chain dehydrogenases/reductases (SDR) family.</text>
</comment>
<sequence length="338" mass="36601">MDVFNVQELSFSLVRDQPYLSAFLLVMGSIGVGRVIYQTLSVFLQTFILPGTNLRKFGAKKGAWAVVTGATDGIGREFSLQLAKAGFHVFLVARNEALLASTAAEIEQKYGVSTATHSIDFSKADKSAYNSLGSSLGSVDVGVLVNNVGKSHAMPAYFVDTPEEEMSDIVSINVQATLQVTHSVLPGMVQRKRGLILNVGSFAGAVPSPMLATYSGTKAFLTTFSSALGEEVRKDNITVEHLNTYFVVSKLSKIRKASALIPKPDAYVRSVLSKIGLPCGASYSGRPNTSTPFWSHALLDYGLTLIGLQSAFISYTHGLHKDIRRRALRKMERDAKLQ</sequence>
<dbReference type="EC" id="1.1.1.330" evidence="4"/>
<dbReference type="EMBL" id="DS547100">
    <property type="protein sequence ID" value="EDR09116.1"/>
    <property type="molecule type" value="Genomic_DNA"/>
</dbReference>
<dbReference type="RefSeq" id="XP_001880429.1">
    <property type="nucleotide sequence ID" value="XM_001880394.1"/>
</dbReference>
<dbReference type="SMR" id="B0D8R3"/>
<dbReference type="FunCoup" id="B0D8R3">
    <property type="interactions" value="434"/>
</dbReference>
<dbReference type="STRING" id="486041.B0D8R3"/>
<dbReference type="GeneID" id="6076163"/>
<dbReference type="KEGG" id="lbc:LACBIDRAFT_192627"/>
<dbReference type="HOGENOM" id="CLU_010194_38_0_1"/>
<dbReference type="InParanoid" id="B0D8R3"/>
<dbReference type="OrthoDB" id="5545019at2759"/>
<dbReference type="UniPathway" id="UPA00094"/>
<dbReference type="Proteomes" id="UP000001194">
    <property type="component" value="Unassembled WGS sequence"/>
</dbReference>
<dbReference type="GO" id="GO:0005789">
    <property type="term" value="C:endoplasmic reticulum membrane"/>
    <property type="evidence" value="ECO:0007669"/>
    <property type="project" value="UniProtKB-SubCell"/>
</dbReference>
<dbReference type="GO" id="GO:0045703">
    <property type="term" value="F:ketoreductase activity"/>
    <property type="evidence" value="ECO:0007669"/>
    <property type="project" value="UniProtKB-UniRule"/>
</dbReference>
<dbReference type="GO" id="GO:0141040">
    <property type="term" value="F:very-long-chain 3-oxoacyl-CoA reductase activity"/>
    <property type="evidence" value="ECO:0007669"/>
    <property type="project" value="UniProtKB-EC"/>
</dbReference>
<dbReference type="GO" id="GO:0030497">
    <property type="term" value="P:fatty acid elongation"/>
    <property type="evidence" value="ECO:0007669"/>
    <property type="project" value="UniProtKB-UniRule"/>
</dbReference>
<dbReference type="CDD" id="cd05356">
    <property type="entry name" value="17beta-HSD1_like_SDR_c"/>
    <property type="match status" value="1"/>
</dbReference>
<dbReference type="FunFam" id="3.40.50.720:FF:000137">
    <property type="entry name" value="Hydroxysteroid (17-beta) dehydrogenase 3"/>
    <property type="match status" value="1"/>
</dbReference>
<dbReference type="Gene3D" id="3.40.50.720">
    <property type="entry name" value="NAD(P)-binding Rossmann-like Domain"/>
    <property type="match status" value="1"/>
</dbReference>
<dbReference type="HAMAP" id="MF_03107">
    <property type="entry name" value="3_ketoreductase"/>
    <property type="match status" value="1"/>
</dbReference>
<dbReference type="InterPro" id="IPR027533">
    <property type="entry name" value="3_ketoreductase_fungal"/>
</dbReference>
<dbReference type="InterPro" id="IPR036291">
    <property type="entry name" value="NAD(P)-bd_dom_sf"/>
</dbReference>
<dbReference type="InterPro" id="IPR020904">
    <property type="entry name" value="Sc_DH/Rdtase_CS"/>
</dbReference>
<dbReference type="InterPro" id="IPR002347">
    <property type="entry name" value="SDR_fam"/>
</dbReference>
<dbReference type="PANTHER" id="PTHR43086:SF2">
    <property type="entry name" value="HYDROXYSTEROID DEHYDROGENASE-LIKE PROTEIN 1"/>
    <property type="match status" value="1"/>
</dbReference>
<dbReference type="PANTHER" id="PTHR43086">
    <property type="entry name" value="VERY-LONG-CHAIN 3-OXOOACYL-COA REDUCTASE"/>
    <property type="match status" value="1"/>
</dbReference>
<dbReference type="Pfam" id="PF00106">
    <property type="entry name" value="adh_short"/>
    <property type="match status" value="1"/>
</dbReference>
<dbReference type="PIRSF" id="PIRSF000126">
    <property type="entry name" value="11-beta-HSD1"/>
    <property type="match status" value="1"/>
</dbReference>
<dbReference type="PRINTS" id="PR00081">
    <property type="entry name" value="GDHRDH"/>
</dbReference>
<dbReference type="PRINTS" id="PR00080">
    <property type="entry name" value="SDRFAMILY"/>
</dbReference>
<dbReference type="SUPFAM" id="SSF51735">
    <property type="entry name" value="NAD(P)-binding Rossmann-fold domains"/>
    <property type="match status" value="1"/>
</dbReference>
<dbReference type="PROSITE" id="PS00061">
    <property type="entry name" value="ADH_SHORT"/>
    <property type="match status" value="1"/>
</dbReference>
<proteinExistence type="inferred from homology"/>
<feature type="chain" id="PRO_0000357311" description="Very-long-chain 3-oxoacyl-CoA reductase">
    <location>
        <begin position="1"/>
        <end position="338"/>
    </location>
</feature>
<feature type="transmembrane region" description="Helical" evidence="4">
    <location>
        <begin position="20"/>
        <end position="40"/>
    </location>
</feature>
<feature type="active site" description="Proton donor" evidence="2">
    <location>
        <position position="214"/>
    </location>
</feature>
<feature type="active site" description="Lowers pKa of active site Tyr" evidence="2">
    <location>
        <position position="218"/>
    </location>
</feature>
<feature type="binding site" evidence="1">
    <location>
        <position position="66"/>
    </location>
    <ligand>
        <name>NADP(+)</name>
        <dbReference type="ChEBI" id="CHEBI:58349"/>
    </ligand>
</feature>
<feature type="binding site" evidence="1">
    <location>
        <position position="95"/>
    </location>
    <ligand>
        <name>NADP(+)</name>
        <dbReference type="ChEBI" id="CHEBI:58349"/>
    </ligand>
</feature>
<feature type="binding site" evidence="1">
    <location>
        <position position="120"/>
    </location>
    <ligand>
        <name>NADP(+)</name>
        <dbReference type="ChEBI" id="CHEBI:58349"/>
    </ligand>
</feature>
<feature type="binding site" evidence="2">
    <location>
        <position position="147"/>
    </location>
    <ligand>
        <name>NADP(+)</name>
        <dbReference type="ChEBI" id="CHEBI:58349"/>
    </ligand>
</feature>
<feature type="binding site" evidence="2">
    <location>
        <position position="214"/>
    </location>
    <ligand>
        <name>NADP(+)</name>
        <dbReference type="ChEBI" id="CHEBI:58349"/>
    </ligand>
</feature>
<feature type="binding site" evidence="2">
    <location>
        <position position="218"/>
    </location>
    <ligand>
        <name>NADP(+)</name>
        <dbReference type="ChEBI" id="CHEBI:58349"/>
    </ligand>
</feature>
<feature type="binding site" evidence="2">
    <location>
        <position position="247"/>
    </location>
    <ligand>
        <name>NADP(+)</name>
        <dbReference type="ChEBI" id="CHEBI:58349"/>
    </ligand>
</feature>
<feature type="binding site" evidence="1">
    <location>
        <position position="249"/>
    </location>
    <ligand>
        <name>NADP(+)</name>
        <dbReference type="ChEBI" id="CHEBI:58349"/>
    </ligand>
</feature>
<keyword id="KW-0256">Endoplasmic reticulum</keyword>
<keyword id="KW-0275">Fatty acid biosynthesis</keyword>
<keyword id="KW-0276">Fatty acid metabolism</keyword>
<keyword id="KW-0444">Lipid biosynthesis</keyword>
<keyword id="KW-0443">Lipid metabolism</keyword>
<keyword id="KW-0472">Membrane</keyword>
<keyword id="KW-0521">NADP</keyword>
<keyword id="KW-0560">Oxidoreductase</keyword>
<keyword id="KW-1185">Reference proteome</keyword>
<keyword id="KW-0812">Transmembrane</keyword>
<keyword id="KW-1133">Transmembrane helix</keyword>
<name>MKAR_LACBS</name>
<accession>B0D8R3</accession>